<reference key="1">
    <citation type="journal article" date="2004" name="Proc. Natl. Acad. Sci. U.S.A.">
        <title>Genome sequence of the enterobacterial phytopathogen Erwinia carotovora subsp. atroseptica and characterization of virulence factors.</title>
        <authorList>
            <person name="Bell K.S."/>
            <person name="Sebaihia M."/>
            <person name="Pritchard L."/>
            <person name="Holden M.T.G."/>
            <person name="Hyman L.J."/>
            <person name="Holeva M.C."/>
            <person name="Thomson N.R."/>
            <person name="Bentley S.D."/>
            <person name="Churcher L.J.C."/>
            <person name="Mungall K."/>
            <person name="Atkin R."/>
            <person name="Bason N."/>
            <person name="Brooks K."/>
            <person name="Chillingworth T."/>
            <person name="Clark K."/>
            <person name="Doggett J."/>
            <person name="Fraser A."/>
            <person name="Hance Z."/>
            <person name="Hauser H."/>
            <person name="Jagels K."/>
            <person name="Moule S."/>
            <person name="Norbertczak H."/>
            <person name="Ormond D."/>
            <person name="Price C."/>
            <person name="Quail M.A."/>
            <person name="Sanders M."/>
            <person name="Walker D."/>
            <person name="Whitehead S."/>
            <person name="Salmond G.P.C."/>
            <person name="Birch P.R.J."/>
            <person name="Parkhill J."/>
            <person name="Toth I.K."/>
        </authorList>
    </citation>
    <scope>NUCLEOTIDE SEQUENCE [LARGE SCALE GENOMIC DNA]</scope>
    <source>
        <strain>SCRI 1043 / ATCC BAA-672</strain>
    </source>
</reference>
<proteinExistence type="inferred from homology"/>
<feature type="chain" id="PRO_0000182295" description="Transcriptional repressor NrdR">
    <location>
        <begin position="1"/>
        <end position="149"/>
    </location>
</feature>
<feature type="domain" description="ATP-cone" evidence="1">
    <location>
        <begin position="49"/>
        <end position="139"/>
    </location>
</feature>
<feature type="zinc finger region" evidence="1">
    <location>
        <begin position="3"/>
        <end position="34"/>
    </location>
</feature>
<dbReference type="EMBL" id="BX950851">
    <property type="protein sequence ID" value="CAG74035.1"/>
    <property type="molecule type" value="Genomic_DNA"/>
</dbReference>
<dbReference type="RefSeq" id="WP_011092719.1">
    <property type="nucleotide sequence ID" value="NC_004547.2"/>
</dbReference>
<dbReference type="SMR" id="Q6D850"/>
<dbReference type="STRING" id="218491.ECA1125"/>
<dbReference type="GeneID" id="57207939"/>
<dbReference type="KEGG" id="eca:ECA1125"/>
<dbReference type="eggNOG" id="COG1327">
    <property type="taxonomic scope" value="Bacteria"/>
</dbReference>
<dbReference type="HOGENOM" id="CLU_108412_0_0_6"/>
<dbReference type="OrthoDB" id="9807461at2"/>
<dbReference type="Proteomes" id="UP000007966">
    <property type="component" value="Chromosome"/>
</dbReference>
<dbReference type="GO" id="GO:0005524">
    <property type="term" value="F:ATP binding"/>
    <property type="evidence" value="ECO:0007669"/>
    <property type="project" value="UniProtKB-KW"/>
</dbReference>
<dbReference type="GO" id="GO:0003677">
    <property type="term" value="F:DNA binding"/>
    <property type="evidence" value="ECO:0007669"/>
    <property type="project" value="UniProtKB-KW"/>
</dbReference>
<dbReference type="GO" id="GO:0008270">
    <property type="term" value="F:zinc ion binding"/>
    <property type="evidence" value="ECO:0007669"/>
    <property type="project" value="UniProtKB-UniRule"/>
</dbReference>
<dbReference type="GO" id="GO:0045892">
    <property type="term" value="P:negative regulation of DNA-templated transcription"/>
    <property type="evidence" value="ECO:0007669"/>
    <property type="project" value="UniProtKB-UniRule"/>
</dbReference>
<dbReference type="HAMAP" id="MF_00440">
    <property type="entry name" value="NrdR"/>
    <property type="match status" value="1"/>
</dbReference>
<dbReference type="InterPro" id="IPR005144">
    <property type="entry name" value="ATP-cone_dom"/>
</dbReference>
<dbReference type="InterPro" id="IPR055173">
    <property type="entry name" value="NrdR-like_N"/>
</dbReference>
<dbReference type="InterPro" id="IPR003796">
    <property type="entry name" value="RNR_NrdR-like"/>
</dbReference>
<dbReference type="NCBIfam" id="TIGR00244">
    <property type="entry name" value="transcriptional regulator NrdR"/>
    <property type="match status" value="1"/>
</dbReference>
<dbReference type="PANTHER" id="PTHR30455">
    <property type="entry name" value="TRANSCRIPTIONAL REPRESSOR NRDR"/>
    <property type="match status" value="1"/>
</dbReference>
<dbReference type="PANTHER" id="PTHR30455:SF2">
    <property type="entry name" value="TRANSCRIPTIONAL REPRESSOR NRDR"/>
    <property type="match status" value="1"/>
</dbReference>
<dbReference type="Pfam" id="PF03477">
    <property type="entry name" value="ATP-cone"/>
    <property type="match status" value="1"/>
</dbReference>
<dbReference type="Pfam" id="PF22811">
    <property type="entry name" value="Zn_ribbon_NrdR"/>
    <property type="match status" value="1"/>
</dbReference>
<dbReference type="PROSITE" id="PS51161">
    <property type="entry name" value="ATP_CONE"/>
    <property type="match status" value="1"/>
</dbReference>
<sequence length="149" mass="17212">MHCPFCSAVDTKVIDSRLVGEGSQVRRRRQCLVCHERFTTFEVAELVLPRVIKSNEVREPFNEDKLRSGMLKALEKRPVSSDDVEMAINHIKSHLRATGEREVTTKMVGNLVMEALRKLDKVAYIRFASVYRSFEDIREFGEEIARLQD</sequence>
<protein>
    <recommendedName>
        <fullName evidence="1">Transcriptional repressor NrdR</fullName>
    </recommendedName>
</protein>
<comment type="function">
    <text evidence="1">Negatively regulates transcription of bacterial ribonucleotide reductase nrd genes and operons by binding to NrdR-boxes.</text>
</comment>
<comment type="cofactor">
    <cofactor evidence="1">
        <name>Zn(2+)</name>
        <dbReference type="ChEBI" id="CHEBI:29105"/>
    </cofactor>
    <text evidence="1">Binds 1 zinc ion.</text>
</comment>
<comment type="similarity">
    <text evidence="1">Belongs to the NrdR family.</text>
</comment>
<organism>
    <name type="scientific">Pectobacterium atrosepticum (strain SCRI 1043 / ATCC BAA-672)</name>
    <name type="common">Erwinia carotovora subsp. atroseptica</name>
    <dbReference type="NCBI Taxonomy" id="218491"/>
    <lineage>
        <taxon>Bacteria</taxon>
        <taxon>Pseudomonadati</taxon>
        <taxon>Pseudomonadota</taxon>
        <taxon>Gammaproteobacteria</taxon>
        <taxon>Enterobacterales</taxon>
        <taxon>Pectobacteriaceae</taxon>
        <taxon>Pectobacterium</taxon>
    </lineage>
</organism>
<accession>Q6D850</accession>
<name>NRDR_PECAS</name>
<evidence type="ECO:0000255" key="1">
    <source>
        <dbReference type="HAMAP-Rule" id="MF_00440"/>
    </source>
</evidence>
<keyword id="KW-0067">ATP-binding</keyword>
<keyword id="KW-0238">DNA-binding</keyword>
<keyword id="KW-0479">Metal-binding</keyword>
<keyword id="KW-0547">Nucleotide-binding</keyword>
<keyword id="KW-1185">Reference proteome</keyword>
<keyword id="KW-0678">Repressor</keyword>
<keyword id="KW-0804">Transcription</keyword>
<keyword id="KW-0805">Transcription regulation</keyword>
<keyword id="KW-0862">Zinc</keyword>
<keyword id="KW-0863">Zinc-finger</keyword>
<gene>
    <name evidence="1" type="primary">nrdR</name>
    <name type="ordered locus">ECA1125</name>
</gene>